<protein>
    <recommendedName>
        <fullName evidence="1">Pyrophosphatase PpaX</fullName>
        <ecNumber evidence="1">3.6.1.1</ecNumber>
    </recommendedName>
</protein>
<dbReference type="EC" id="3.6.1.1" evidence="1"/>
<dbReference type="EMBL" id="CP001283">
    <property type="protein sequence ID" value="ACK90869.1"/>
    <property type="molecule type" value="Genomic_DNA"/>
</dbReference>
<dbReference type="RefSeq" id="WP_000700959.1">
    <property type="nucleotide sequence ID" value="NC_011773.1"/>
</dbReference>
<dbReference type="SMR" id="B7JFI8"/>
<dbReference type="KEGG" id="bcu:BCAH820_5246"/>
<dbReference type="HOGENOM" id="CLU_045011_19_3_9"/>
<dbReference type="Proteomes" id="UP000001363">
    <property type="component" value="Chromosome"/>
</dbReference>
<dbReference type="GO" id="GO:0005829">
    <property type="term" value="C:cytosol"/>
    <property type="evidence" value="ECO:0007669"/>
    <property type="project" value="TreeGrafter"/>
</dbReference>
<dbReference type="GO" id="GO:0004427">
    <property type="term" value="F:inorganic diphosphate phosphatase activity"/>
    <property type="evidence" value="ECO:0007669"/>
    <property type="project" value="UniProtKB-UniRule"/>
</dbReference>
<dbReference type="GO" id="GO:0000287">
    <property type="term" value="F:magnesium ion binding"/>
    <property type="evidence" value="ECO:0007669"/>
    <property type="project" value="UniProtKB-UniRule"/>
</dbReference>
<dbReference type="GO" id="GO:0008967">
    <property type="term" value="F:phosphoglycolate phosphatase activity"/>
    <property type="evidence" value="ECO:0007669"/>
    <property type="project" value="TreeGrafter"/>
</dbReference>
<dbReference type="GO" id="GO:0006281">
    <property type="term" value="P:DNA repair"/>
    <property type="evidence" value="ECO:0007669"/>
    <property type="project" value="TreeGrafter"/>
</dbReference>
<dbReference type="CDD" id="cd02616">
    <property type="entry name" value="HAD_PPase"/>
    <property type="match status" value="1"/>
</dbReference>
<dbReference type="FunFam" id="3.40.50.1000:FF:000022">
    <property type="entry name" value="Phosphoglycolate phosphatase"/>
    <property type="match status" value="1"/>
</dbReference>
<dbReference type="FunFam" id="1.10.150.240:FF:000008">
    <property type="entry name" value="Pyrophosphatase PpaX"/>
    <property type="match status" value="1"/>
</dbReference>
<dbReference type="Gene3D" id="3.40.50.1000">
    <property type="entry name" value="HAD superfamily/HAD-like"/>
    <property type="match status" value="1"/>
</dbReference>
<dbReference type="Gene3D" id="1.10.150.240">
    <property type="entry name" value="Putative phosphatase, domain 2"/>
    <property type="match status" value="1"/>
</dbReference>
<dbReference type="HAMAP" id="MF_01250">
    <property type="entry name" value="Pyrophosphat_PpaX"/>
    <property type="match status" value="1"/>
</dbReference>
<dbReference type="InterPro" id="IPR050155">
    <property type="entry name" value="HAD-like_hydrolase_sf"/>
</dbReference>
<dbReference type="InterPro" id="IPR036412">
    <property type="entry name" value="HAD-like_sf"/>
</dbReference>
<dbReference type="InterPro" id="IPR006439">
    <property type="entry name" value="HAD-SF_hydro_IA"/>
</dbReference>
<dbReference type="InterPro" id="IPR006549">
    <property type="entry name" value="HAD-SF_hydro_IIIA"/>
</dbReference>
<dbReference type="InterPro" id="IPR041492">
    <property type="entry name" value="HAD_2"/>
</dbReference>
<dbReference type="InterPro" id="IPR023214">
    <property type="entry name" value="HAD_sf"/>
</dbReference>
<dbReference type="InterPro" id="IPR023198">
    <property type="entry name" value="PGP-like_dom2"/>
</dbReference>
<dbReference type="InterPro" id="IPR023733">
    <property type="entry name" value="Pyrophosphatase_Ppax"/>
</dbReference>
<dbReference type="NCBIfam" id="TIGR01549">
    <property type="entry name" value="HAD-SF-IA-v1"/>
    <property type="match status" value="1"/>
</dbReference>
<dbReference type="NCBIfam" id="TIGR01509">
    <property type="entry name" value="HAD-SF-IA-v3"/>
    <property type="match status" value="1"/>
</dbReference>
<dbReference type="NCBIfam" id="TIGR01662">
    <property type="entry name" value="HAD-SF-IIIA"/>
    <property type="match status" value="1"/>
</dbReference>
<dbReference type="NCBIfam" id="NF009804">
    <property type="entry name" value="PRK13288.1"/>
    <property type="match status" value="1"/>
</dbReference>
<dbReference type="PANTHER" id="PTHR43434">
    <property type="entry name" value="PHOSPHOGLYCOLATE PHOSPHATASE"/>
    <property type="match status" value="1"/>
</dbReference>
<dbReference type="PANTHER" id="PTHR43434:SF26">
    <property type="entry name" value="PYROPHOSPHATASE PPAX"/>
    <property type="match status" value="1"/>
</dbReference>
<dbReference type="Pfam" id="PF13419">
    <property type="entry name" value="HAD_2"/>
    <property type="match status" value="1"/>
</dbReference>
<dbReference type="PRINTS" id="PR00413">
    <property type="entry name" value="HADHALOGNASE"/>
</dbReference>
<dbReference type="SFLD" id="SFLDG01135">
    <property type="entry name" value="C1.5.6:_HAD__Beta-PGM__Phospha"/>
    <property type="match status" value="1"/>
</dbReference>
<dbReference type="SFLD" id="SFLDS00003">
    <property type="entry name" value="Haloacid_Dehalogenase"/>
    <property type="match status" value="1"/>
</dbReference>
<dbReference type="SUPFAM" id="SSF56784">
    <property type="entry name" value="HAD-like"/>
    <property type="match status" value="1"/>
</dbReference>
<proteinExistence type="inferred from homology"/>
<evidence type="ECO:0000255" key="1">
    <source>
        <dbReference type="HAMAP-Rule" id="MF_01250"/>
    </source>
</evidence>
<sequence>MKINTVLFDLDGTLINTNELIISSFLHTLHTYYPNQYKREDVLPFIGPSLHDTFSKIDESKVEELITSYRQFNHDHHDELVEEYETVYETVQELKKQGYKVGIVTTKARQTVEMGLKLSKLDEFFDVVVTIDDVEHVKPHPEPLQKALQLLGAKPEEALMVGDNHHDIVGGQNAGTKTAAVSWTLKGRAYLEAYKPDFMLDKMSDLLPILSDMNRS</sequence>
<organism>
    <name type="scientific">Bacillus cereus (strain AH820)</name>
    <dbReference type="NCBI Taxonomy" id="405535"/>
    <lineage>
        <taxon>Bacteria</taxon>
        <taxon>Bacillati</taxon>
        <taxon>Bacillota</taxon>
        <taxon>Bacilli</taxon>
        <taxon>Bacillales</taxon>
        <taxon>Bacillaceae</taxon>
        <taxon>Bacillus</taxon>
        <taxon>Bacillus cereus group</taxon>
    </lineage>
</organism>
<reference key="1">
    <citation type="submission" date="2008-10" db="EMBL/GenBank/DDBJ databases">
        <title>Genome sequence of Bacillus cereus AH820.</title>
        <authorList>
            <person name="Dodson R.J."/>
            <person name="Durkin A.S."/>
            <person name="Rosovitz M.J."/>
            <person name="Rasko D.A."/>
            <person name="Hoffmaster A."/>
            <person name="Ravel J."/>
            <person name="Sutton G."/>
        </authorList>
    </citation>
    <scope>NUCLEOTIDE SEQUENCE [LARGE SCALE GENOMIC DNA]</scope>
    <source>
        <strain>AH820</strain>
    </source>
</reference>
<name>PPAX_BACC0</name>
<feature type="chain" id="PRO_1000139923" description="Pyrophosphatase PpaX">
    <location>
        <begin position="1"/>
        <end position="216"/>
    </location>
</feature>
<feature type="active site" description="Nucleophile" evidence="1">
    <location>
        <position position="9"/>
    </location>
</feature>
<keyword id="KW-0378">Hydrolase</keyword>
<keyword id="KW-0460">Magnesium</keyword>
<gene>
    <name evidence="1" type="primary">ppaX</name>
    <name type="ordered locus">BCAH820_5246</name>
</gene>
<comment type="function">
    <text evidence="1">Hydrolyzes pyrophosphate formed during P-Ser-HPr dephosphorylation by HPrK/P. Might play a role in controlling the intracellular pyrophosphate pool.</text>
</comment>
<comment type="catalytic activity">
    <reaction evidence="1">
        <text>diphosphate + H2O = 2 phosphate + H(+)</text>
        <dbReference type="Rhea" id="RHEA:24576"/>
        <dbReference type="ChEBI" id="CHEBI:15377"/>
        <dbReference type="ChEBI" id="CHEBI:15378"/>
        <dbReference type="ChEBI" id="CHEBI:33019"/>
        <dbReference type="ChEBI" id="CHEBI:43474"/>
        <dbReference type="EC" id="3.6.1.1"/>
    </reaction>
</comment>
<comment type="cofactor">
    <cofactor evidence="1">
        <name>Mg(2+)</name>
        <dbReference type="ChEBI" id="CHEBI:18420"/>
    </cofactor>
</comment>
<comment type="similarity">
    <text evidence="1">Belongs to the HAD-like hydrolase superfamily. PpaX family.</text>
</comment>
<accession>B7JFI8</accession>